<reference key="1">
    <citation type="journal article" date="2006" name="PLoS Biol.">
        <title>Metabolic complementarity and genomics of the dual bacterial symbiosis of sharpshooters.</title>
        <authorList>
            <person name="Wu D."/>
            <person name="Daugherty S.C."/>
            <person name="Van Aken S.E."/>
            <person name="Pai G.H."/>
            <person name="Watkins K.L."/>
            <person name="Khouri H."/>
            <person name="Tallon L.J."/>
            <person name="Zaborsky J.M."/>
            <person name="Dunbar H.E."/>
            <person name="Tran P.L."/>
            <person name="Moran N.A."/>
            <person name="Eisen J.A."/>
        </authorList>
    </citation>
    <scope>NUCLEOTIDE SEQUENCE [LARGE SCALE GENOMIC DNA]</scope>
</reference>
<dbReference type="EMBL" id="CP000238">
    <property type="protein sequence ID" value="ABF14296.1"/>
    <property type="status" value="ALT_INIT"/>
    <property type="molecule type" value="Genomic_DNA"/>
</dbReference>
<dbReference type="RefSeq" id="WP_041574970.1">
    <property type="nucleotide sequence ID" value="NC_007984.1"/>
</dbReference>
<dbReference type="SMR" id="Q1LSL1"/>
<dbReference type="STRING" id="374463.BCI_0628"/>
<dbReference type="KEGG" id="bci:BCI_0628"/>
<dbReference type="HOGENOM" id="CLU_148518_0_0_6"/>
<dbReference type="OrthoDB" id="9799262at2"/>
<dbReference type="Proteomes" id="UP000002427">
    <property type="component" value="Chromosome"/>
</dbReference>
<dbReference type="GO" id="GO:0022627">
    <property type="term" value="C:cytosolic small ribosomal subunit"/>
    <property type="evidence" value="ECO:0007669"/>
    <property type="project" value="TreeGrafter"/>
</dbReference>
<dbReference type="GO" id="GO:0019843">
    <property type="term" value="F:rRNA binding"/>
    <property type="evidence" value="ECO:0007669"/>
    <property type="project" value="UniProtKB-UniRule"/>
</dbReference>
<dbReference type="GO" id="GO:0003735">
    <property type="term" value="F:structural constituent of ribosome"/>
    <property type="evidence" value="ECO:0007669"/>
    <property type="project" value="InterPro"/>
</dbReference>
<dbReference type="GO" id="GO:0006412">
    <property type="term" value="P:translation"/>
    <property type="evidence" value="ECO:0007669"/>
    <property type="project" value="UniProtKB-UniRule"/>
</dbReference>
<dbReference type="CDD" id="cd00353">
    <property type="entry name" value="Ribosomal_S15p_S13e"/>
    <property type="match status" value="1"/>
</dbReference>
<dbReference type="FunFam" id="1.10.287.10:FF:000002">
    <property type="entry name" value="30S ribosomal protein S15"/>
    <property type="match status" value="1"/>
</dbReference>
<dbReference type="Gene3D" id="6.10.250.3130">
    <property type="match status" value="1"/>
</dbReference>
<dbReference type="Gene3D" id="1.10.287.10">
    <property type="entry name" value="S15/NS1, RNA-binding"/>
    <property type="match status" value="1"/>
</dbReference>
<dbReference type="HAMAP" id="MF_01343_B">
    <property type="entry name" value="Ribosomal_uS15_B"/>
    <property type="match status" value="1"/>
</dbReference>
<dbReference type="InterPro" id="IPR000589">
    <property type="entry name" value="Ribosomal_uS15"/>
</dbReference>
<dbReference type="InterPro" id="IPR005290">
    <property type="entry name" value="Ribosomal_uS15_bac-type"/>
</dbReference>
<dbReference type="InterPro" id="IPR009068">
    <property type="entry name" value="uS15_NS1_RNA-bd_sf"/>
</dbReference>
<dbReference type="NCBIfam" id="TIGR00952">
    <property type="entry name" value="S15_bact"/>
    <property type="match status" value="1"/>
</dbReference>
<dbReference type="PANTHER" id="PTHR23321">
    <property type="entry name" value="RIBOSOMAL PROTEIN S15, BACTERIAL AND ORGANELLAR"/>
    <property type="match status" value="1"/>
</dbReference>
<dbReference type="PANTHER" id="PTHR23321:SF26">
    <property type="entry name" value="SMALL RIBOSOMAL SUBUNIT PROTEIN US15M"/>
    <property type="match status" value="1"/>
</dbReference>
<dbReference type="Pfam" id="PF00312">
    <property type="entry name" value="Ribosomal_S15"/>
    <property type="match status" value="1"/>
</dbReference>
<dbReference type="SMART" id="SM01387">
    <property type="entry name" value="Ribosomal_S15"/>
    <property type="match status" value="1"/>
</dbReference>
<dbReference type="SUPFAM" id="SSF47060">
    <property type="entry name" value="S15/NS1 RNA-binding domain"/>
    <property type="match status" value="1"/>
</dbReference>
<dbReference type="PROSITE" id="PS00362">
    <property type="entry name" value="RIBOSOMAL_S15"/>
    <property type="match status" value="1"/>
</dbReference>
<organism>
    <name type="scientific">Baumannia cicadellinicola subsp. Homalodisca coagulata</name>
    <dbReference type="NCBI Taxonomy" id="374463"/>
    <lineage>
        <taxon>Bacteria</taxon>
        <taxon>Pseudomonadati</taxon>
        <taxon>Pseudomonadota</taxon>
        <taxon>Gammaproteobacteria</taxon>
        <taxon>Candidatus Palibaumannia</taxon>
    </lineage>
</organism>
<comment type="function">
    <text evidence="1">One of the primary rRNA binding proteins, it binds directly to 16S rRNA where it helps nucleate assembly of the platform of the 30S subunit by binding and bridging several RNA helices of the 16S rRNA.</text>
</comment>
<comment type="function">
    <text evidence="1">Forms an intersubunit bridge (bridge B4) with the 23S rRNA of the 50S subunit in the ribosome.</text>
</comment>
<comment type="subunit">
    <text evidence="1">Part of the 30S ribosomal subunit. Forms a bridge to the 50S subunit in the 70S ribosome, contacting the 23S rRNA.</text>
</comment>
<comment type="similarity">
    <text evidence="1">Belongs to the universal ribosomal protein uS15 family.</text>
</comment>
<comment type="sequence caution" evidence="2">
    <conflict type="erroneous initiation">
        <sequence resource="EMBL-CDS" id="ABF14296"/>
    </conflict>
</comment>
<keyword id="KW-1185">Reference proteome</keyword>
<keyword id="KW-0687">Ribonucleoprotein</keyword>
<keyword id="KW-0689">Ribosomal protein</keyword>
<keyword id="KW-0694">RNA-binding</keyword>
<keyword id="KW-0699">rRNA-binding</keyword>
<name>RS15_BAUCH</name>
<sequence length="89" mass="10349">MSLSFNTKAKIIADFGRNNYDSGSTAVQIALLTAQINHLQDHFAVHKKDHHSRRGLLRIVSQRRKLLVYFKNKDLASYTDLIERLNLRR</sequence>
<evidence type="ECO:0000255" key="1">
    <source>
        <dbReference type="HAMAP-Rule" id="MF_01343"/>
    </source>
</evidence>
<evidence type="ECO:0000305" key="2"/>
<gene>
    <name evidence="1" type="primary">rpsO</name>
    <name type="ordered locus">BCI_0628</name>
</gene>
<feature type="chain" id="PRO_0000255478" description="Small ribosomal subunit protein uS15">
    <location>
        <begin position="1"/>
        <end position="89"/>
    </location>
</feature>
<accession>Q1LSL1</accession>
<protein>
    <recommendedName>
        <fullName evidence="1">Small ribosomal subunit protein uS15</fullName>
    </recommendedName>
    <alternativeName>
        <fullName evidence="2">30S ribosomal protein S15</fullName>
    </alternativeName>
</protein>
<proteinExistence type="inferred from homology"/>